<evidence type="ECO:0000255" key="1"/>
<evidence type="ECO:0000256" key="2">
    <source>
        <dbReference type="SAM" id="MobiDB-lite"/>
    </source>
</evidence>
<evidence type="ECO:0000305" key="3"/>
<organism>
    <name type="scientific">Escherichia coli (strain K12)</name>
    <dbReference type="NCBI Taxonomy" id="83333"/>
    <lineage>
        <taxon>Bacteria</taxon>
        <taxon>Pseudomonadati</taxon>
        <taxon>Pseudomonadota</taxon>
        <taxon>Gammaproteobacteria</taxon>
        <taxon>Enterobacterales</taxon>
        <taxon>Enterobacteriaceae</taxon>
        <taxon>Escherichia</taxon>
    </lineage>
</organism>
<feature type="signal peptide" evidence="1">
    <location>
        <begin position="1"/>
        <end position="20"/>
    </location>
</feature>
<feature type="chain" id="PRO_0000022170" description="Phosphate starvation-inducible protein PsiF">
    <location>
        <begin position="21"/>
        <end position="106"/>
    </location>
</feature>
<feature type="region of interest" description="Disordered" evidence="2">
    <location>
        <begin position="58"/>
        <end position="92"/>
    </location>
</feature>
<feature type="compositionally biased region" description="Polar residues" evidence="2">
    <location>
        <begin position="70"/>
        <end position="89"/>
    </location>
</feature>
<sequence length="106" mass="11687">MKITLLVTLLFGLVFLTTVGAAERTLTPQQQRMTSCNQQATAQALKGDARKTYMSDCLKNSKSAPGEKSLTPQQQKMRECNNQATQQSLKGDDRNKFMSACLKKAA</sequence>
<dbReference type="EMBL" id="M13345">
    <property type="protein sequence ID" value="AAA83894.1"/>
    <property type="molecule type" value="Genomic_DNA"/>
</dbReference>
<dbReference type="EMBL" id="U00096">
    <property type="protein sequence ID" value="AAC73487.2"/>
    <property type="molecule type" value="Genomic_DNA"/>
</dbReference>
<dbReference type="EMBL" id="AP009048">
    <property type="protein sequence ID" value="BAE76165.1"/>
    <property type="molecule type" value="Genomic_DNA"/>
</dbReference>
<dbReference type="EMBL" id="U73857">
    <property type="protein sequence ID" value="AAB18108.1"/>
    <property type="status" value="ALT_INIT"/>
    <property type="molecule type" value="Genomic_DNA"/>
</dbReference>
<dbReference type="RefSeq" id="NP_414918.4">
    <property type="nucleotide sequence ID" value="NC_000913.3"/>
</dbReference>
<dbReference type="RefSeq" id="WP_001295332.1">
    <property type="nucleotide sequence ID" value="NZ_STEB01000007.1"/>
</dbReference>
<dbReference type="BioGRID" id="4259828">
    <property type="interactions" value="41"/>
</dbReference>
<dbReference type="FunCoup" id="P0AFM4">
    <property type="interactions" value="31"/>
</dbReference>
<dbReference type="STRING" id="511145.b0384"/>
<dbReference type="jPOST" id="P0AFM4"/>
<dbReference type="PaxDb" id="511145-b0384"/>
<dbReference type="EnsemblBacteria" id="AAC73487">
    <property type="protein sequence ID" value="AAC73487"/>
    <property type="gene ID" value="b0384"/>
</dbReference>
<dbReference type="GeneID" id="93777078"/>
<dbReference type="GeneID" id="945040"/>
<dbReference type="KEGG" id="ecj:JW5054"/>
<dbReference type="KEGG" id="eco:b0384"/>
<dbReference type="PATRIC" id="fig|511145.12.peg.396"/>
<dbReference type="EchoBASE" id="EB1373"/>
<dbReference type="eggNOG" id="ENOG5032ZDU">
    <property type="taxonomic scope" value="Bacteria"/>
</dbReference>
<dbReference type="HOGENOM" id="CLU_129289_1_0_6"/>
<dbReference type="InParanoid" id="P0AFM4"/>
<dbReference type="OMA" id="DCNQQAT"/>
<dbReference type="OrthoDB" id="8001925at2"/>
<dbReference type="PhylomeDB" id="P0AFM4"/>
<dbReference type="BioCyc" id="EcoCyc:EG11401-MONOMER"/>
<dbReference type="PRO" id="PR:P0AFM4"/>
<dbReference type="Proteomes" id="UP000000625">
    <property type="component" value="Chromosome"/>
</dbReference>
<dbReference type="InterPro" id="IPR011690">
    <property type="entry name" value="P_starv_induced_PsiF"/>
</dbReference>
<dbReference type="NCBIfam" id="NF008560">
    <property type="entry name" value="PRK11505.1"/>
    <property type="match status" value="1"/>
</dbReference>
<dbReference type="Pfam" id="PF07769">
    <property type="entry name" value="PsiF_repeat"/>
    <property type="match status" value="2"/>
</dbReference>
<name>PSIF_ECOLI</name>
<proteinExistence type="evidence at protein level"/>
<protein>
    <recommendedName>
        <fullName>Phosphate starvation-inducible protein PsiF</fullName>
    </recommendedName>
</protein>
<gene>
    <name type="primary">psiF</name>
    <name type="ordered locus">b0384</name>
    <name type="ordered locus">JW5054</name>
</gene>
<comment type="sequence caution" evidence="3">
    <conflict type="erroneous initiation">
        <sequence resource="EMBL-CDS" id="AAB18108"/>
    </conflict>
    <text>Extended N-terminus.</text>
</comment>
<reference key="1">
    <citation type="journal article" date="1986" name="Gene">
        <title>Nucleotide sequence of the alkaline phosphatase gene of Escherichia coli.</title>
        <authorList>
            <person name="Chang C.N."/>
            <person name="Kuang W.-J."/>
            <person name="Chen E.Y."/>
        </authorList>
    </citation>
    <scope>NUCLEOTIDE SEQUENCE [GENOMIC DNA]</scope>
</reference>
<reference key="2">
    <citation type="submission" date="1997-01" db="EMBL/GenBank/DDBJ databases">
        <title>Sequence of minutes 4-25 of Escherichia coli.</title>
        <authorList>
            <person name="Chung E."/>
            <person name="Allen E."/>
            <person name="Araujo R."/>
            <person name="Aparicio A.M."/>
            <person name="Davis K."/>
            <person name="Duncan M."/>
            <person name="Federspiel N."/>
            <person name="Hyman R."/>
            <person name="Kalman S."/>
            <person name="Komp C."/>
            <person name="Kurdi O."/>
            <person name="Lew H."/>
            <person name="Lin D."/>
            <person name="Namath A."/>
            <person name="Oefner P."/>
            <person name="Roberts D."/>
            <person name="Schramm S."/>
            <person name="Davis R.W."/>
        </authorList>
    </citation>
    <scope>NUCLEOTIDE SEQUENCE [LARGE SCALE GENOMIC DNA]</scope>
    <source>
        <strain>K12 / MG1655 / ATCC 47076</strain>
    </source>
</reference>
<reference key="3">
    <citation type="journal article" date="1997" name="Science">
        <title>The complete genome sequence of Escherichia coli K-12.</title>
        <authorList>
            <person name="Blattner F.R."/>
            <person name="Plunkett G. III"/>
            <person name="Bloch C.A."/>
            <person name="Perna N.T."/>
            <person name="Burland V."/>
            <person name="Riley M."/>
            <person name="Collado-Vides J."/>
            <person name="Glasner J.D."/>
            <person name="Rode C.K."/>
            <person name="Mayhew G.F."/>
            <person name="Gregor J."/>
            <person name="Davis N.W."/>
            <person name="Kirkpatrick H.A."/>
            <person name="Goeden M.A."/>
            <person name="Rose D.J."/>
            <person name="Mau B."/>
            <person name="Shao Y."/>
        </authorList>
    </citation>
    <scope>NUCLEOTIDE SEQUENCE [LARGE SCALE GENOMIC DNA]</scope>
    <source>
        <strain>K12 / MG1655 / ATCC 47076</strain>
    </source>
</reference>
<reference key="4">
    <citation type="journal article" date="2006" name="Mol. Syst. Biol.">
        <title>Highly accurate genome sequences of Escherichia coli K-12 strains MG1655 and W3110.</title>
        <authorList>
            <person name="Hayashi K."/>
            <person name="Morooka N."/>
            <person name="Yamamoto Y."/>
            <person name="Fujita K."/>
            <person name="Isono K."/>
            <person name="Choi S."/>
            <person name="Ohtsubo E."/>
            <person name="Baba T."/>
            <person name="Wanner B.L."/>
            <person name="Mori H."/>
            <person name="Horiuchi T."/>
        </authorList>
    </citation>
    <scope>NUCLEOTIDE SEQUENCE [LARGE SCALE GENOMIC DNA]</scope>
    <source>
        <strain>K12 / W3110 / ATCC 27325 / DSM 5911</strain>
    </source>
</reference>
<reference key="5">
    <citation type="journal article" date="1990" name="J. Bacteriol.">
        <title>Identification of phosphate starvation-inducible genes in Escherichia coli K-12 by DNA sequence analysis of psi::lacZ(Mu d1) transcriptional fusions.</title>
        <authorList>
            <person name="Metcalf W.W."/>
            <person name="Steed P.M."/>
            <person name="Wanner B.L."/>
        </authorList>
    </citation>
    <scope>CHARACTERIZATION</scope>
    <source>
        <strain>K12</strain>
    </source>
</reference>
<accession>P0AFM4</accession>
<accession>P27295</accession>
<accession>Q2MC41</accession>
<keyword id="KW-1185">Reference proteome</keyword>
<keyword id="KW-0732">Signal</keyword>